<reference key="1">
    <citation type="journal article" date="2007" name="Archaea">
        <title>The genome of Hyperthermus butylicus: a sulfur-reducing, peptide fermenting, neutrophilic Crenarchaeote growing up to 108 degrees C.</title>
        <authorList>
            <person name="Bruegger K."/>
            <person name="Chen L."/>
            <person name="Stark M."/>
            <person name="Zibat A."/>
            <person name="Redder P."/>
            <person name="Ruepp A."/>
            <person name="Awayez M."/>
            <person name="She Q."/>
            <person name="Garrett R.A."/>
            <person name="Klenk H.-P."/>
        </authorList>
    </citation>
    <scope>NUCLEOTIDE SEQUENCE [LARGE SCALE GENOMIC DNA]</scope>
    <source>
        <strain>DSM 5456 / JCM 9403 / PLM1-5</strain>
    </source>
</reference>
<sequence>MLHHPGTGQLRALKGTTTVGIVFRDFVVLAADRRATAGYFVAHKRTKKIIKITDYMAMTTAGLVADAQMLAEWLANHTHYYEIVNKRRMSIHAAAQYLSIILHSAKFYPYIVQLLLGGYDTQPRLYNIDWFGSVTEEKYVATGSGSPTAIGVIEDQYSPNLSMEEAVELAKRAVASSIRRDTFTGNGVDVVVIGKDFYREYSFELKDILKTK</sequence>
<dbReference type="EC" id="3.4.25.1" evidence="1"/>
<dbReference type="EMBL" id="CP000493">
    <property type="protein sequence ID" value="ABM81388.1"/>
    <property type="molecule type" value="Genomic_DNA"/>
</dbReference>
<dbReference type="RefSeq" id="WP_011822706.1">
    <property type="nucleotide sequence ID" value="NC_008818.1"/>
</dbReference>
<dbReference type="SMR" id="A2BN27"/>
<dbReference type="STRING" id="415426.Hbut_1567"/>
<dbReference type="MEROPS" id="T01.002"/>
<dbReference type="EnsemblBacteria" id="ABM81388">
    <property type="protein sequence ID" value="ABM81388"/>
    <property type="gene ID" value="Hbut_1567"/>
</dbReference>
<dbReference type="GeneID" id="4782914"/>
<dbReference type="KEGG" id="hbu:Hbut_1567"/>
<dbReference type="eggNOG" id="arCOG00970">
    <property type="taxonomic scope" value="Archaea"/>
</dbReference>
<dbReference type="HOGENOM" id="CLU_035750_7_2_2"/>
<dbReference type="OrthoDB" id="6330at2157"/>
<dbReference type="Proteomes" id="UP000002593">
    <property type="component" value="Chromosome"/>
</dbReference>
<dbReference type="GO" id="GO:0005737">
    <property type="term" value="C:cytoplasm"/>
    <property type="evidence" value="ECO:0007669"/>
    <property type="project" value="UniProtKB-SubCell"/>
</dbReference>
<dbReference type="GO" id="GO:0019774">
    <property type="term" value="C:proteasome core complex, beta-subunit complex"/>
    <property type="evidence" value="ECO:0007669"/>
    <property type="project" value="UniProtKB-UniRule"/>
</dbReference>
<dbReference type="GO" id="GO:0004298">
    <property type="term" value="F:threonine-type endopeptidase activity"/>
    <property type="evidence" value="ECO:0007669"/>
    <property type="project" value="UniProtKB-UniRule"/>
</dbReference>
<dbReference type="GO" id="GO:0010498">
    <property type="term" value="P:proteasomal protein catabolic process"/>
    <property type="evidence" value="ECO:0007669"/>
    <property type="project" value="UniProtKB-UniRule"/>
</dbReference>
<dbReference type="CDD" id="cd03764">
    <property type="entry name" value="proteasome_beta_archeal"/>
    <property type="match status" value="1"/>
</dbReference>
<dbReference type="FunFam" id="3.60.20.10:FF:000049">
    <property type="entry name" value="Proteasome subunit beta"/>
    <property type="match status" value="1"/>
</dbReference>
<dbReference type="Gene3D" id="3.60.20.10">
    <property type="entry name" value="Glutamine Phosphoribosylpyrophosphate, subunit 1, domain 1"/>
    <property type="match status" value="1"/>
</dbReference>
<dbReference type="HAMAP" id="MF_02113_A">
    <property type="entry name" value="Proteasome_B_A"/>
    <property type="match status" value="1"/>
</dbReference>
<dbReference type="InterPro" id="IPR029055">
    <property type="entry name" value="Ntn_hydrolases_N"/>
</dbReference>
<dbReference type="InterPro" id="IPR019983">
    <property type="entry name" value="Pept_T1A_Psome_bsu_arc"/>
</dbReference>
<dbReference type="InterPro" id="IPR000243">
    <property type="entry name" value="Pept_T1A_subB"/>
</dbReference>
<dbReference type="InterPro" id="IPR016050">
    <property type="entry name" value="Proteasome_bsu_CS"/>
</dbReference>
<dbReference type="InterPro" id="IPR001353">
    <property type="entry name" value="Proteasome_sua/b"/>
</dbReference>
<dbReference type="InterPro" id="IPR023333">
    <property type="entry name" value="Proteasome_suB-type"/>
</dbReference>
<dbReference type="NCBIfam" id="TIGR03634">
    <property type="entry name" value="arc_protsome_B"/>
    <property type="match status" value="1"/>
</dbReference>
<dbReference type="PANTHER" id="PTHR32194:SF0">
    <property type="entry name" value="ATP-DEPENDENT PROTEASE SUBUNIT HSLV"/>
    <property type="match status" value="1"/>
</dbReference>
<dbReference type="PANTHER" id="PTHR32194">
    <property type="entry name" value="METALLOPROTEASE TLDD"/>
    <property type="match status" value="1"/>
</dbReference>
<dbReference type="Pfam" id="PF00227">
    <property type="entry name" value="Proteasome"/>
    <property type="match status" value="1"/>
</dbReference>
<dbReference type="PRINTS" id="PR00141">
    <property type="entry name" value="PROTEASOME"/>
</dbReference>
<dbReference type="SUPFAM" id="SSF56235">
    <property type="entry name" value="N-terminal nucleophile aminohydrolases (Ntn hydrolases)"/>
    <property type="match status" value="1"/>
</dbReference>
<dbReference type="PROSITE" id="PS00854">
    <property type="entry name" value="PROTEASOME_BETA_1"/>
    <property type="match status" value="1"/>
</dbReference>
<dbReference type="PROSITE" id="PS51476">
    <property type="entry name" value="PROTEASOME_BETA_2"/>
    <property type="match status" value="1"/>
</dbReference>
<name>PSB2_HYPBU</name>
<keyword id="KW-0068">Autocatalytic cleavage</keyword>
<keyword id="KW-0963">Cytoplasm</keyword>
<keyword id="KW-0378">Hydrolase</keyword>
<keyword id="KW-0645">Protease</keyword>
<keyword id="KW-0647">Proteasome</keyword>
<keyword id="KW-1185">Reference proteome</keyword>
<keyword id="KW-0888">Threonine protease</keyword>
<keyword id="KW-0865">Zymogen</keyword>
<organism>
    <name type="scientific">Hyperthermus butylicus (strain DSM 5456 / JCM 9403 / PLM1-5)</name>
    <dbReference type="NCBI Taxonomy" id="415426"/>
    <lineage>
        <taxon>Archaea</taxon>
        <taxon>Thermoproteota</taxon>
        <taxon>Thermoprotei</taxon>
        <taxon>Desulfurococcales</taxon>
        <taxon>Pyrodictiaceae</taxon>
        <taxon>Hyperthermus</taxon>
    </lineage>
</organism>
<gene>
    <name evidence="1" type="primary">psmB2</name>
    <name type="ordered locus">Hbut_1567</name>
</gene>
<proteinExistence type="inferred from homology"/>
<comment type="function">
    <text evidence="1">Component of the proteasome core, a large protease complex with broad specificity involved in protein degradation.</text>
</comment>
<comment type="catalytic activity">
    <reaction evidence="1">
        <text>Cleavage of peptide bonds with very broad specificity.</text>
        <dbReference type="EC" id="3.4.25.1"/>
    </reaction>
</comment>
<comment type="activity regulation">
    <text evidence="1">The formation of the proteasomal ATPase PAN-20S proteasome complex, via the docking of the C-termini of PAN into the intersubunit pockets in the alpha-rings, triggers opening of the gate for substrate entry. Interconversion between the open-gate and close-gate conformations leads to a dynamic regulation of the 20S proteasome proteolysis activity.</text>
</comment>
<comment type="subunit">
    <text evidence="1">The 20S proteasome core is composed of 14 alpha and 14 beta subunits that assemble into four stacked heptameric rings, resulting in a barrel-shaped structure. The two inner rings, each composed of seven catalytic beta subunits, are sandwiched by two outer rings, each composed of seven alpha subunits. The catalytic chamber with the active sites is on the inside of the barrel. Has a gated structure, the ends of the cylinder being occluded by the N-termini of the alpha-subunits. Is capped at one or both ends by the proteasome regulatory ATPase, PAN.</text>
</comment>
<comment type="subcellular location">
    <subcellularLocation>
        <location evidence="1">Cytoplasm</location>
    </subcellularLocation>
</comment>
<comment type="similarity">
    <text evidence="1">Belongs to the peptidase T1B family.</text>
</comment>
<protein>
    <recommendedName>
        <fullName evidence="1">Proteasome subunit beta 2</fullName>
        <ecNumber evidence="1">3.4.25.1</ecNumber>
    </recommendedName>
    <alternativeName>
        <fullName evidence="1">20S proteasome beta subunit 2</fullName>
    </alternativeName>
    <alternativeName>
        <fullName evidence="1">Proteasome core protein PsmB 2</fullName>
    </alternativeName>
</protein>
<feature type="propeptide" id="PRO_0000397316" description="Removed in mature form; by autocatalysis" evidence="1">
    <location>
        <begin position="1"/>
        <end position="15"/>
    </location>
</feature>
<feature type="chain" id="PRO_0000397317" description="Proteasome subunit beta 2">
    <location>
        <begin position="16"/>
        <end position="212"/>
    </location>
</feature>
<feature type="active site" description="Nucleophile" evidence="1">
    <location>
        <position position="16"/>
    </location>
</feature>
<accession>A2BN27</accession>
<evidence type="ECO:0000255" key="1">
    <source>
        <dbReference type="HAMAP-Rule" id="MF_02113"/>
    </source>
</evidence>